<organism>
    <name type="scientific">Staphylococcus epidermidis (strain ATCC 12228 / FDA PCI 1200)</name>
    <dbReference type="NCBI Taxonomy" id="176280"/>
    <lineage>
        <taxon>Bacteria</taxon>
        <taxon>Bacillati</taxon>
        <taxon>Bacillota</taxon>
        <taxon>Bacilli</taxon>
        <taxon>Bacillales</taxon>
        <taxon>Staphylococcaceae</taxon>
        <taxon>Staphylococcus</taxon>
    </lineage>
</organism>
<name>UREG_STAES</name>
<feature type="chain" id="PRO_1000145237" description="Urease accessory protein UreG">
    <location>
        <begin position="1"/>
        <end position="204"/>
    </location>
</feature>
<feature type="binding site" evidence="1">
    <location>
        <begin position="11"/>
        <end position="18"/>
    </location>
    <ligand>
        <name>GTP</name>
        <dbReference type="ChEBI" id="CHEBI:37565"/>
    </ligand>
</feature>
<keyword id="KW-0143">Chaperone</keyword>
<keyword id="KW-0963">Cytoplasm</keyword>
<keyword id="KW-0342">GTP-binding</keyword>
<keyword id="KW-0996">Nickel insertion</keyword>
<keyword id="KW-0547">Nucleotide-binding</keyword>
<reference key="1">
    <citation type="journal article" date="2003" name="Mol. Microbiol.">
        <title>Genome-based analysis of virulence genes in a non-biofilm-forming Staphylococcus epidermidis strain (ATCC 12228).</title>
        <authorList>
            <person name="Zhang Y.-Q."/>
            <person name="Ren S.-X."/>
            <person name="Li H.-L."/>
            <person name="Wang Y.-X."/>
            <person name="Fu G."/>
            <person name="Yang J."/>
            <person name="Qin Z.-Q."/>
            <person name="Miao Y.-G."/>
            <person name="Wang W.-Y."/>
            <person name="Chen R.-S."/>
            <person name="Shen Y."/>
            <person name="Chen Z."/>
            <person name="Yuan Z.-H."/>
            <person name="Zhao G.-P."/>
            <person name="Qu D."/>
            <person name="Danchin A."/>
            <person name="Wen Y.-M."/>
        </authorList>
    </citation>
    <scope>NUCLEOTIDE SEQUENCE [LARGE SCALE GENOMIC DNA]</scope>
    <source>
        <strain>ATCC 12228 / FDA PCI 1200</strain>
    </source>
</reference>
<sequence length="204" mass="22340">MSNPIKIGIGGPVGAGKTQLIEKVVKRLAKEMSIGVITNDIYTKEDEKILVNTGVLPEDRIIGVETGGCPHTAIREDASMNFAAIDELLERNDDIELIFIESGGDNLAATFSPELVDFSIYIIDVAQGEKIPRKGGQGMIKSDFFIINKTDLAPYVGASLDQMAKDTEVFRGNRPFAFTNLKTDEGLEKVIEWIEHDVLLKGLT</sequence>
<protein>
    <recommendedName>
        <fullName evidence="1">Urease accessory protein UreG</fullName>
    </recommendedName>
</protein>
<accession>Q8CNC6</accession>
<evidence type="ECO:0000255" key="1">
    <source>
        <dbReference type="HAMAP-Rule" id="MF_01389"/>
    </source>
</evidence>
<gene>
    <name evidence="1" type="primary">ureG</name>
    <name type="ordered locus">SE_1866</name>
</gene>
<proteinExistence type="inferred from homology"/>
<dbReference type="EMBL" id="AE015929">
    <property type="protein sequence ID" value="AAO05507.1"/>
    <property type="molecule type" value="Genomic_DNA"/>
</dbReference>
<dbReference type="RefSeq" id="NP_765421.1">
    <property type="nucleotide sequence ID" value="NC_004461.1"/>
</dbReference>
<dbReference type="RefSeq" id="WP_002477667.1">
    <property type="nucleotide sequence ID" value="NZ_WBME01000034.1"/>
</dbReference>
<dbReference type="SMR" id="Q8CNC6"/>
<dbReference type="KEGG" id="sep:SE_1866"/>
<dbReference type="PATRIC" id="fig|176280.10.peg.1823"/>
<dbReference type="eggNOG" id="COG0378">
    <property type="taxonomic scope" value="Bacteria"/>
</dbReference>
<dbReference type="HOGENOM" id="CLU_072144_1_0_9"/>
<dbReference type="OrthoDB" id="9802035at2"/>
<dbReference type="Proteomes" id="UP000001411">
    <property type="component" value="Chromosome"/>
</dbReference>
<dbReference type="GO" id="GO:0005737">
    <property type="term" value="C:cytoplasm"/>
    <property type="evidence" value="ECO:0007669"/>
    <property type="project" value="UniProtKB-SubCell"/>
</dbReference>
<dbReference type="GO" id="GO:0005525">
    <property type="term" value="F:GTP binding"/>
    <property type="evidence" value="ECO:0007669"/>
    <property type="project" value="UniProtKB-KW"/>
</dbReference>
<dbReference type="GO" id="GO:0003924">
    <property type="term" value="F:GTPase activity"/>
    <property type="evidence" value="ECO:0007669"/>
    <property type="project" value="InterPro"/>
</dbReference>
<dbReference type="GO" id="GO:0016151">
    <property type="term" value="F:nickel cation binding"/>
    <property type="evidence" value="ECO:0007669"/>
    <property type="project" value="UniProtKB-UniRule"/>
</dbReference>
<dbReference type="GO" id="GO:0043419">
    <property type="term" value="P:urea catabolic process"/>
    <property type="evidence" value="ECO:0007669"/>
    <property type="project" value="InterPro"/>
</dbReference>
<dbReference type="CDD" id="cd05540">
    <property type="entry name" value="UreG"/>
    <property type="match status" value="1"/>
</dbReference>
<dbReference type="Gene3D" id="3.40.50.300">
    <property type="entry name" value="P-loop containing nucleotide triphosphate hydrolases"/>
    <property type="match status" value="1"/>
</dbReference>
<dbReference type="HAMAP" id="MF_01389">
    <property type="entry name" value="UreG"/>
    <property type="match status" value="1"/>
</dbReference>
<dbReference type="InterPro" id="IPR003495">
    <property type="entry name" value="CobW/HypB/UreG_nucleotide-bd"/>
</dbReference>
<dbReference type="InterPro" id="IPR027417">
    <property type="entry name" value="P-loop_NTPase"/>
</dbReference>
<dbReference type="InterPro" id="IPR004400">
    <property type="entry name" value="UreG"/>
</dbReference>
<dbReference type="NCBIfam" id="TIGR00101">
    <property type="entry name" value="ureG"/>
    <property type="match status" value="1"/>
</dbReference>
<dbReference type="PANTHER" id="PTHR31715">
    <property type="entry name" value="UREASE ACCESSORY PROTEIN G"/>
    <property type="match status" value="1"/>
</dbReference>
<dbReference type="PANTHER" id="PTHR31715:SF0">
    <property type="entry name" value="UREASE ACCESSORY PROTEIN G"/>
    <property type="match status" value="1"/>
</dbReference>
<dbReference type="Pfam" id="PF02492">
    <property type="entry name" value="cobW"/>
    <property type="match status" value="1"/>
</dbReference>
<dbReference type="PIRSF" id="PIRSF005624">
    <property type="entry name" value="Ni-bind_GTPase"/>
    <property type="match status" value="1"/>
</dbReference>
<dbReference type="SUPFAM" id="SSF52540">
    <property type="entry name" value="P-loop containing nucleoside triphosphate hydrolases"/>
    <property type="match status" value="1"/>
</dbReference>
<comment type="function">
    <text evidence="1">Facilitates the functional incorporation of the urease nickel metallocenter. This process requires GTP hydrolysis, probably effectuated by UreG.</text>
</comment>
<comment type="subunit">
    <text evidence="1">Homodimer. UreD, UreF and UreG form a complex that acts as a GTP-hydrolysis-dependent molecular chaperone, activating the urease apoprotein by helping to assemble the nickel containing metallocenter of UreC. The UreE protein probably delivers the nickel.</text>
</comment>
<comment type="subcellular location">
    <subcellularLocation>
        <location evidence="1">Cytoplasm</location>
    </subcellularLocation>
</comment>
<comment type="similarity">
    <text evidence="1">Belongs to the SIMIBI class G3E GTPase family. UreG subfamily.</text>
</comment>